<proteinExistence type="inferred from homology"/>
<reference key="1">
    <citation type="submission" date="2006-09" db="EMBL/GenBank/DDBJ databases">
        <authorList>
            <consortium name="The Klebsiella pneumonia Genome Sequencing Project"/>
            <person name="McClelland M."/>
            <person name="Sanderson E.K."/>
            <person name="Spieth J."/>
            <person name="Clifton W.S."/>
            <person name="Latreille P."/>
            <person name="Sabo A."/>
            <person name="Pepin K."/>
            <person name="Bhonagiri V."/>
            <person name="Porwollik S."/>
            <person name="Ali J."/>
            <person name="Wilson R.K."/>
        </authorList>
    </citation>
    <scope>NUCLEOTIDE SEQUENCE [LARGE SCALE GENOMIC DNA]</scope>
    <source>
        <strain>ATCC 700721 / MGH 78578</strain>
    </source>
</reference>
<gene>
    <name evidence="1" type="primary">nagB</name>
    <name type="ordered locus">KPN78578_06810</name>
    <name type="ORF">KPN_00699</name>
</gene>
<organism>
    <name type="scientific">Klebsiella pneumoniae subsp. pneumoniae (strain ATCC 700721 / MGH 78578)</name>
    <dbReference type="NCBI Taxonomy" id="272620"/>
    <lineage>
        <taxon>Bacteria</taxon>
        <taxon>Pseudomonadati</taxon>
        <taxon>Pseudomonadota</taxon>
        <taxon>Gammaproteobacteria</taxon>
        <taxon>Enterobacterales</taxon>
        <taxon>Enterobacteriaceae</taxon>
        <taxon>Klebsiella/Raoultella group</taxon>
        <taxon>Klebsiella</taxon>
        <taxon>Klebsiella pneumoniae complex</taxon>
    </lineage>
</organism>
<dbReference type="EC" id="3.5.99.6" evidence="1"/>
<dbReference type="EMBL" id="CP000647">
    <property type="protein sequence ID" value="ABR76142.1"/>
    <property type="molecule type" value="Genomic_DNA"/>
</dbReference>
<dbReference type="RefSeq" id="WP_002894749.1">
    <property type="nucleotide sequence ID" value="NC_009648.1"/>
</dbReference>
<dbReference type="SMR" id="A6T6C1"/>
<dbReference type="STRING" id="272620.KPN_00699"/>
<dbReference type="jPOST" id="A6T6C1"/>
<dbReference type="PaxDb" id="272620-KPN_00699"/>
<dbReference type="EnsemblBacteria" id="ABR76142">
    <property type="protein sequence ID" value="ABR76142"/>
    <property type="gene ID" value="KPN_00699"/>
</dbReference>
<dbReference type="KEGG" id="kpn:KPN_00699"/>
<dbReference type="HOGENOM" id="CLU_049611_0_1_6"/>
<dbReference type="UniPathway" id="UPA00629">
    <property type="reaction ID" value="UER00684"/>
</dbReference>
<dbReference type="Proteomes" id="UP000000265">
    <property type="component" value="Chromosome"/>
</dbReference>
<dbReference type="GO" id="GO:0005737">
    <property type="term" value="C:cytoplasm"/>
    <property type="evidence" value="ECO:0007669"/>
    <property type="project" value="TreeGrafter"/>
</dbReference>
<dbReference type="GO" id="GO:0004342">
    <property type="term" value="F:glucosamine-6-phosphate deaminase activity"/>
    <property type="evidence" value="ECO:0007669"/>
    <property type="project" value="UniProtKB-UniRule"/>
</dbReference>
<dbReference type="GO" id="GO:0042802">
    <property type="term" value="F:identical protein binding"/>
    <property type="evidence" value="ECO:0007669"/>
    <property type="project" value="TreeGrafter"/>
</dbReference>
<dbReference type="GO" id="GO:0005975">
    <property type="term" value="P:carbohydrate metabolic process"/>
    <property type="evidence" value="ECO:0007669"/>
    <property type="project" value="InterPro"/>
</dbReference>
<dbReference type="GO" id="GO:0006043">
    <property type="term" value="P:glucosamine catabolic process"/>
    <property type="evidence" value="ECO:0007669"/>
    <property type="project" value="TreeGrafter"/>
</dbReference>
<dbReference type="GO" id="GO:0006046">
    <property type="term" value="P:N-acetylglucosamine catabolic process"/>
    <property type="evidence" value="ECO:0007669"/>
    <property type="project" value="TreeGrafter"/>
</dbReference>
<dbReference type="GO" id="GO:0019262">
    <property type="term" value="P:N-acetylneuraminate catabolic process"/>
    <property type="evidence" value="ECO:0007669"/>
    <property type="project" value="UniProtKB-UniRule"/>
</dbReference>
<dbReference type="CDD" id="cd01399">
    <property type="entry name" value="GlcN6P_deaminase"/>
    <property type="match status" value="1"/>
</dbReference>
<dbReference type="FunFam" id="3.40.50.1360:FF:000002">
    <property type="entry name" value="Glucosamine-6-phosphate deaminase"/>
    <property type="match status" value="1"/>
</dbReference>
<dbReference type="Gene3D" id="3.40.50.1360">
    <property type="match status" value="1"/>
</dbReference>
<dbReference type="HAMAP" id="MF_01241">
    <property type="entry name" value="GlcN6P_deamin"/>
    <property type="match status" value="1"/>
</dbReference>
<dbReference type="InterPro" id="IPR006148">
    <property type="entry name" value="Glc/Gal-6P_isomerase"/>
</dbReference>
<dbReference type="InterPro" id="IPR004547">
    <property type="entry name" value="Glucosamine6P_isomerase"/>
</dbReference>
<dbReference type="InterPro" id="IPR018321">
    <property type="entry name" value="Glucosamine6P_isomerase_CS"/>
</dbReference>
<dbReference type="InterPro" id="IPR037171">
    <property type="entry name" value="NagB/RpiA_transferase-like"/>
</dbReference>
<dbReference type="NCBIfam" id="TIGR00502">
    <property type="entry name" value="nagB"/>
    <property type="match status" value="1"/>
</dbReference>
<dbReference type="NCBIfam" id="NF001685">
    <property type="entry name" value="PRK00443.1-5"/>
    <property type="match status" value="1"/>
</dbReference>
<dbReference type="PANTHER" id="PTHR11280">
    <property type="entry name" value="GLUCOSAMINE-6-PHOSPHATE ISOMERASE"/>
    <property type="match status" value="1"/>
</dbReference>
<dbReference type="PANTHER" id="PTHR11280:SF5">
    <property type="entry name" value="GLUCOSAMINE-6-PHOSPHATE ISOMERASE"/>
    <property type="match status" value="1"/>
</dbReference>
<dbReference type="Pfam" id="PF01182">
    <property type="entry name" value="Glucosamine_iso"/>
    <property type="match status" value="1"/>
</dbReference>
<dbReference type="SUPFAM" id="SSF100950">
    <property type="entry name" value="NagB/RpiA/CoA transferase-like"/>
    <property type="match status" value="1"/>
</dbReference>
<dbReference type="PROSITE" id="PS01161">
    <property type="entry name" value="GLC_GALNAC_ISOMERASE"/>
    <property type="match status" value="1"/>
</dbReference>
<comment type="function">
    <text evidence="1">Catalyzes the reversible isomerization-deamination of glucosamine 6-phosphate (GlcN6P) to form fructose 6-phosphate (Fru6P) and ammonium ion.</text>
</comment>
<comment type="catalytic activity">
    <reaction evidence="1">
        <text>alpha-D-glucosamine 6-phosphate + H2O = beta-D-fructose 6-phosphate + NH4(+)</text>
        <dbReference type="Rhea" id="RHEA:12172"/>
        <dbReference type="ChEBI" id="CHEBI:15377"/>
        <dbReference type="ChEBI" id="CHEBI:28938"/>
        <dbReference type="ChEBI" id="CHEBI:57634"/>
        <dbReference type="ChEBI" id="CHEBI:75989"/>
        <dbReference type="EC" id="3.5.99.6"/>
    </reaction>
</comment>
<comment type="activity regulation">
    <text evidence="1">Allosterically activated by N-acetylglucosamine 6-phosphate (GlcNAc6P).</text>
</comment>
<comment type="pathway">
    <text evidence="1">Amino-sugar metabolism; N-acetylneuraminate degradation; D-fructose 6-phosphate from N-acetylneuraminate: step 5/5.</text>
</comment>
<comment type="subunit">
    <text evidence="1">Homohexamer.</text>
</comment>
<comment type="similarity">
    <text evidence="1">Belongs to the glucosamine/galactosamine-6-phosphate isomerase family. NagB subfamily.</text>
</comment>
<accession>A6T6C1</accession>
<evidence type="ECO:0000255" key="1">
    <source>
        <dbReference type="HAMAP-Rule" id="MF_01241"/>
    </source>
</evidence>
<name>NAGB_KLEP7</name>
<keyword id="KW-0021">Allosteric enzyme</keyword>
<keyword id="KW-0119">Carbohydrate metabolism</keyword>
<keyword id="KW-0378">Hydrolase</keyword>
<protein>
    <recommendedName>
        <fullName evidence="1">Glucosamine-6-phosphate deaminase</fullName>
        <ecNumber evidence="1">3.5.99.6</ecNumber>
    </recommendedName>
    <alternativeName>
        <fullName evidence="1">GlcN6P deaminase</fullName>
        <shortName evidence="1">GNPDA</shortName>
    </alternativeName>
    <alternativeName>
        <fullName evidence="1">Glucosamine-6-phosphate isomerase</fullName>
    </alternativeName>
</protein>
<sequence>MRLIPLVTAEQVGKWAARHIVNRINAFKPTADRPFVLGLPTGGTPLTAYKALVEMHKAGQVSFKHVVTFNMDEYVGLPKEHPESYHSFMHRNFFDHVDIPAENINLLNGNAPDIDAECRRYEEKIRSYGKIHLFMGGVGNDGHIAFNEPASSLASRTRIKTLTHETRVANSRFFDGDVDLVPKYALTVGVGTLLDAEEVMILVLGHQKALALQAAVEGNVNHMWTITCLQLHPKAVIVCDEPSTMELKVKTLKYFNELEAENIKGL</sequence>
<feature type="chain" id="PRO_1000066989" description="Glucosamine-6-phosphate deaminase">
    <location>
        <begin position="1"/>
        <end position="266"/>
    </location>
</feature>
<feature type="active site" description="Proton acceptor; for enolization step" evidence="1">
    <location>
        <position position="72"/>
    </location>
</feature>
<feature type="active site" description="For ring-opening step" evidence="1">
    <location>
        <position position="141"/>
    </location>
</feature>
<feature type="active site" description="Proton acceptor; for ring-opening step" evidence="1">
    <location>
        <position position="143"/>
    </location>
</feature>
<feature type="active site" description="For ring-opening step" evidence="1">
    <location>
        <position position="148"/>
    </location>
</feature>
<feature type="site" description="Part of the allosteric site" evidence="1">
    <location>
        <position position="151"/>
    </location>
</feature>
<feature type="site" description="Part of the allosteric site" evidence="1">
    <location>
        <position position="158"/>
    </location>
</feature>
<feature type="site" description="Part of the allosteric site" evidence="1">
    <location>
        <position position="160"/>
    </location>
</feature>
<feature type="site" description="Part of the allosteric site" evidence="1">
    <location>
        <position position="161"/>
    </location>
</feature>
<feature type="site" description="Part of the allosteric site" evidence="1">
    <location>
        <position position="254"/>
    </location>
</feature>